<comment type="similarity">
    <text evidence="1">Belongs to the UPF0502 family.</text>
</comment>
<protein>
    <recommendedName>
        <fullName evidence="1">UPF0502 protein BPSS1373</fullName>
    </recommendedName>
</protein>
<name>Y5373_BURPS</name>
<organism>
    <name type="scientific">Burkholderia pseudomallei (strain K96243)</name>
    <dbReference type="NCBI Taxonomy" id="272560"/>
    <lineage>
        <taxon>Bacteria</taxon>
        <taxon>Pseudomonadati</taxon>
        <taxon>Pseudomonadota</taxon>
        <taxon>Betaproteobacteria</taxon>
        <taxon>Burkholderiales</taxon>
        <taxon>Burkholderiaceae</taxon>
        <taxon>Burkholderia</taxon>
        <taxon>pseudomallei group</taxon>
    </lineage>
</organism>
<keyword id="KW-1185">Reference proteome</keyword>
<accession>Q63KI8</accession>
<reference key="1">
    <citation type="journal article" date="2004" name="Proc. Natl. Acad. Sci. U.S.A.">
        <title>Genomic plasticity of the causative agent of melioidosis, Burkholderia pseudomallei.</title>
        <authorList>
            <person name="Holden M.T.G."/>
            <person name="Titball R.W."/>
            <person name="Peacock S.J."/>
            <person name="Cerdeno-Tarraga A.-M."/>
            <person name="Atkins T."/>
            <person name="Crossman L.C."/>
            <person name="Pitt T."/>
            <person name="Churcher C."/>
            <person name="Mungall K.L."/>
            <person name="Bentley S.D."/>
            <person name="Sebaihia M."/>
            <person name="Thomson N.R."/>
            <person name="Bason N."/>
            <person name="Beacham I.R."/>
            <person name="Brooks K."/>
            <person name="Brown K.A."/>
            <person name="Brown N.F."/>
            <person name="Challis G.L."/>
            <person name="Cherevach I."/>
            <person name="Chillingworth T."/>
            <person name="Cronin A."/>
            <person name="Crossett B."/>
            <person name="Davis P."/>
            <person name="DeShazer D."/>
            <person name="Feltwell T."/>
            <person name="Fraser A."/>
            <person name="Hance Z."/>
            <person name="Hauser H."/>
            <person name="Holroyd S."/>
            <person name="Jagels K."/>
            <person name="Keith K.E."/>
            <person name="Maddison M."/>
            <person name="Moule S."/>
            <person name="Price C."/>
            <person name="Quail M.A."/>
            <person name="Rabbinowitsch E."/>
            <person name="Rutherford K."/>
            <person name="Sanders M."/>
            <person name="Simmonds M."/>
            <person name="Songsivilai S."/>
            <person name="Stevens K."/>
            <person name="Tumapa S."/>
            <person name="Vesaratchavest M."/>
            <person name="Whitehead S."/>
            <person name="Yeats C."/>
            <person name="Barrell B.G."/>
            <person name="Oyston P.C.F."/>
            <person name="Parkhill J."/>
        </authorList>
    </citation>
    <scope>NUCLEOTIDE SEQUENCE [LARGE SCALE GENOMIC DNA]</scope>
    <source>
        <strain>K96243</strain>
    </source>
</reference>
<dbReference type="EMBL" id="BX571966">
    <property type="protein sequence ID" value="CAH38845.1"/>
    <property type="molecule type" value="Genomic_DNA"/>
</dbReference>
<dbReference type="RefSeq" id="WP_004528683.1">
    <property type="nucleotide sequence ID" value="NZ_CP009537.1"/>
</dbReference>
<dbReference type="RefSeq" id="YP_111384.1">
    <property type="nucleotide sequence ID" value="NC_006351.1"/>
</dbReference>
<dbReference type="SMR" id="Q63KI8"/>
<dbReference type="STRING" id="272560.BPSS1373"/>
<dbReference type="KEGG" id="bps:BPSS1373"/>
<dbReference type="PATRIC" id="fig|272560.51.peg.4687"/>
<dbReference type="eggNOG" id="COG3132">
    <property type="taxonomic scope" value="Bacteria"/>
</dbReference>
<dbReference type="Proteomes" id="UP000000605">
    <property type="component" value="Chromosome 2"/>
</dbReference>
<dbReference type="Gene3D" id="1.10.10.10">
    <property type="entry name" value="Winged helix-like DNA-binding domain superfamily/Winged helix DNA-binding domain"/>
    <property type="match status" value="2"/>
</dbReference>
<dbReference type="HAMAP" id="MF_01584">
    <property type="entry name" value="UPF0502"/>
    <property type="match status" value="1"/>
</dbReference>
<dbReference type="InterPro" id="IPR007432">
    <property type="entry name" value="DUF480"/>
</dbReference>
<dbReference type="InterPro" id="IPR036388">
    <property type="entry name" value="WH-like_DNA-bd_sf"/>
</dbReference>
<dbReference type="InterPro" id="IPR036390">
    <property type="entry name" value="WH_DNA-bd_sf"/>
</dbReference>
<dbReference type="PANTHER" id="PTHR38768">
    <property type="entry name" value="UPF0502 PROTEIN YCEH"/>
    <property type="match status" value="1"/>
</dbReference>
<dbReference type="PANTHER" id="PTHR38768:SF1">
    <property type="entry name" value="UPF0502 PROTEIN YCEH"/>
    <property type="match status" value="1"/>
</dbReference>
<dbReference type="Pfam" id="PF04337">
    <property type="entry name" value="DUF480"/>
    <property type="match status" value="1"/>
</dbReference>
<dbReference type="SUPFAM" id="SSF46785">
    <property type="entry name" value="Winged helix' DNA-binding domain"/>
    <property type="match status" value="2"/>
</dbReference>
<feature type="chain" id="PRO_0000309375" description="UPF0502 protein BPSS1373">
    <location>
        <begin position="1"/>
        <end position="234"/>
    </location>
</feature>
<sequence>MNSTPDTFQRPALRELTPLEARVLGVLIEKQHTVPDTYPLSLNALTAGCNQKTARSPVMNVSEAEVLTAIDGLKRLSLASEGSSSRVPRFEHNMNRVLGIPSQAAALLTMLLLRGPQTAAELRLNSARLHGFADISSVEAFLDELAARTPPLVVKLPRAPGARESRWMHLMCGDVAPDEAPAHGAHEDAVPPSEFEALKAEQKALTAELAQLRALVEYMANELGIDVGKLTRGV</sequence>
<evidence type="ECO:0000255" key="1">
    <source>
        <dbReference type="HAMAP-Rule" id="MF_01584"/>
    </source>
</evidence>
<gene>
    <name type="ordered locus">BPSS1373</name>
</gene>
<proteinExistence type="inferred from homology"/>